<feature type="initiator methionine" description="Removed" evidence="1">
    <location>
        <position position="1"/>
    </location>
</feature>
<feature type="chain" id="PRO_1000008788" description="Formamidopyrimidine-DNA glycosylase">
    <location>
        <begin position="2"/>
        <end position="269"/>
    </location>
</feature>
<feature type="zinc finger region" description="FPG-type" evidence="2">
    <location>
        <begin position="235"/>
        <end position="269"/>
    </location>
</feature>
<feature type="active site" description="Schiff-base intermediate with DNA" evidence="2">
    <location>
        <position position="2"/>
    </location>
</feature>
<feature type="active site" description="Proton donor" evidence="2">
    <location>
        <position position="3"/>
    </location>
</feature>
<feature type="active site" description="Proton donor; for beta-elimination activity" evidence="2">
    <location>
        <position position="58"/>
    </location>
</feature>
<feature type="active site" description="Proton donor; for delta-elimination activity" evidence="2">
    <location>
        <position position="259"/>
    </location>
</feature>
<feature type="binding site" evidence="2">
    <location>
        <position position="91"/>
    </location>
    <ligand>
        <name>DNA</name>
        <dbReference type="ChEBI" id="CHEBI:16991"/>
    </ligand>
</feature>
<feature type="binding site" evidence="2">
    <location>
        <position position="110"/>
    </location>
    <ligand>
        <name>DNA</name>
        <dbReference type="ChEBI" id="CHEBI:16991"/>
    </ligand>
</feature>
<feature type="binding site" evidence="2">
    <location>
        <position position="150"/>
    </location>
    <ligand>
        <name>DNA</name>
        <dbReference type="ChEBI" id="CHEBI:16991"/>
    </ligand>
</feature>
<accession>A5CX90</accession>
<evidence type="ECO:0000250" key="1"/>
<evidence type="ECO:0000255" key="2">
    <source>
        <dbReference type="HAMAP-Rule" id="MF_00103"/>
    </source>
</evidence>
<dbReference type="EC" id="3.2.2.23" evidence="2"/>
<dbReference type="EC" id="4.2.99.18" evidence="2"/>
<dbReference type="EMBL" id="AP009247">
    <property type="protein sequence ID" value="BAF61439.1"/>
    <property type="molecule type" value="Genomic_DNA"/>
</dbReference>
<dbReference type="RefSeq" id="WP_011929709.1">
    <property type="nucleotide sequence ID" value="NC_009465.1"/>
</dbReference>
<dbReference type="SMR" id="A5CX90"/>
<dbReference type="STRING" id="412965.COSY_0314"/>
<dbReference type="KEGG" id="vok:COSY_0314"/>
<dbReference type="eggNOG" id="COG0266">
    <property type="taxonomic scope" value="Bacteria"/>
</dbReference>
<dbReference type="HOGENOM" id="CLU_038423_1_1_6"/>
<dbReference type="OrthoDB" id="9800855at2"/>
<dbReference type="Proteomes" id="UP000000247">
    <property type="component" value="Chromosome"/>
</dbReference>
<dbReference type="GO" id="GO:0034039">
    <property type="term" value="F:8-oxo-7,8-dihydroguanine DNA N-glycosylase activity"/>
    <property type="evidence" value="ECO:0007669"/>
    <property type="project" value="TreeGrafter"/>
</dbReference>
<dbReference type="GO" id="GO:0140078">
    <property type="term" value="F:class I DNA-(apurinic or apyrimidinic site) endonuclease activity"/>
    <property type="evidence" value="ECO:0007669"/>
    <property type="project" value="UniProtKB-EC"/>
</dbReference>
<dbReference type="GO" id="GO:0003684">
    <property type="term" value="F:damaged DNA binding"/>
    <property type="evidence" value="ECO:0007669"/>
    <property type="project" value="InterPro"/>
</dbReference>
<dbReference type="GO" id="GO:0008270">
    <property type="term" value="F:zinc ion binding"/>
    <property type="evidence" value="ECO:0007669"/>
    <property type="project" value="UniProtKB-UniRule"/>
</dbReference>
<dbReference type="GO" id="GO:0006284">
    <property type="term" value="P:base-excision repair"/>
    <property type="evidence" value="ECO:0007669"/>
    <property type="project" value="InterPro"/>
</dbReference>
<dbReference type="CDD" id="cd08966">
    <property type="entry name" value="EcFpg-like_N"/>
    <property type="match status" value="1"/>
</dbReference>
<dbReference type="FunFam" id="1.10.8.50:FF:000003">
    <property type="entry name" value="Formamidopyrimidine-DNA glycosylase"/>
    <property type="match status" value="1"/>
</dbReference>
<dbReference type="Gene3D" id="1.10.8.50">
    <property type="match status" value="1"/>
</dbReference>
<dbReference type="Gene3D" id="3.20.190.10">
    <property type="entry name" value="MutM-like, N-terminal"/>
    <property type="match status" value="1"/>
</dbReference>
<dbReference type="HAMAP" id="MF_00103">
    <property type="entry name" value="Fapy_DNA_glycosyl"/>
    <property type="match status" value="1"/>
</dbReference>
<dbReference type="InterPro" id="IPR015886">
    <property type="entry name" value="DNA_glyclase/AP_lyase_DNA-bd"/>
</dbReference>
<dbReference type="InterPro" id="IPR015887">
    <property type="entry name" value="DNA_glyclase_Znf_dom_DNA_BS"/>
</dbReference>
<dbReference type="InterPro" id="IPR020629">
    <property type="entry name" value="Formamido-pyr_DNA_Glyclase"/>
</dbReference>
<dbReference type="InterPro" id="IPR012319">
    <property type="entry name" value="FPG_cat"/>
</dbReference>
<dbReference type="InterPro" id="IPR035937">
    <property type="entry name" value="MutM-like_N-ter"/>
</dbReference>
<dbReference type="InterPro" id="IPR010979">
    <property type="entry name" value="Ribosomal_uS13-like_H2TH"/>
</dbReference>
<dbReference type="InterPro" id="IPR000214">
    <property type="entry name" value="Znf_DNA_glyclase/AP_lyase"/>
</dbReference>
<dbReference type="InterPro" id="IPR010663">
    <property type="entry name" value="Znf_FPG/IleRS"/>
</dbReference>
<dbReference type="NCBIfam" id="TIGR00577">
    <property type="entry name" value="fpg"/>
    <property type="match status" value="1"/>
</dbReference>
<dbReference type="NCBIfam" id="NF002211">
    <property type="entry name" value="PRK01103.1"/>
    <property type="match status" value="1"/>
</dbReference>
<dbReference type="PANTHER" id="PTHR22993">
    <property type="entry name" value="FORMAMIDOPYRIMIDINE-DNA GLYCOSYLASE"/>
    <property type="match status" value="1"/>
</dbReference>
<dbReference type="PANTHER" id="PTHR22993:SF9">
    <property type="entry name" value="FORMAMIDOPYRIMIDINE-DNA GLYCOSYLASE"/>
    <property type="match status" value="1"/>
</dbReference>
<dbReference type="Pfam" id="PF01149">
    <property type="entry name" value="Fapy_DNA_glyco"/>
    <property type="match status" value="1"/>
</dbReference>
<dbReference type="Pfam" id="PF06831">
    <property type="entry name" value="H2TH"/>
    <property type="match status" value="1"/>
</dbReference>
<dbReference type="Pfam" id="PF06827">
    <property type="entry name" value="zf-FPG_IleRS"/>
    <property type="match status" value="1"/>
</dbReference>
<dbReference type="SMART" id="SM00898">
    <property type="entry name" value="Fapy_DNA_glyco"/>
    <property type="match status" value="1"/>
</dbReference>
<dbReference type="SMART" id="SM01232">
    <property type="entry name" value="H2TH"/>
    <property type="match status" value="1"/>
</dbReference>
<dbReference type="SUPFAM" id="SSF57716">
    <property type="entry name" value="Glucocorticoid receptor-like (DNA-binding domain)"/>
    <property type="match status" value="1"/>
</dbReference>
<dbReference type="SUPFAM" id="SSF81624">
    <property type="entry name" value="N-terminal domain of MutM-like DNA repair proteins"/>
    <property type="match status" value="1"/>
</dbReference>
<dbReference type="SUPFAM" id="SSF46946">
    <property type="entry name" value="S13-like H2TH domain"/>
    <property type="match status" value="1"/>
</dbReference>
<dbReference type="PROSITE" id="PS51068">
    <property type="entry name" value="FPG_CAT"/>
    <property type="match status" value="1"/>
</dbReference>
<dbReference type="PROSITE" id="PS01242">
    <property type="entry name" value="ZF_FPG_1"/>
    <property type="match status" value="1"/>
</dbReference>
<dbReference type="PROSITE" id="PS51066">
    <property type="entry name" value="ZF_FPG_2"/>
    <property type="match status" value="1"/>
</dbReference>
<organism>
    <name type="scientific">Vesicomyosocius okutanii subsp. Calyptogena okutanii (strain HA)</name>
    <dbReference type="NCBI Taxonomy" id="412965"/>
    <lineage>
        <taxon>Bacteria</taxon>
        <taxon>Pseudomonadati</taxon>
        <taxon>Pseudomonadota</taxon>
        <taxon>Gammaproteobacteria</taxon>
        <taxon>Candidatus Pseudothioglobaceae</taxon>
        <taxon>Candidatus Vesicomyosocius</taxon>
    </lineage>
</organism>
<proteinExistence type="inferred from homology"/>
<protein>
    <recommendedName>
        <fullName evidence="2">Formamidopyrimidine-DNA glycosylase</fullName>
        <shortName evidence="2">Fapy-DNA glycosylase</shortName>
        <ecNumber evidence="2">3.2.2.23</ecNumber>
    </recommendedName>
    <alternativeName>
        <fullName evidence="2">DNA-(apurinic or apyrimidinic site) lyase MutM</fullName>
        <shortName evidence="2">AP lyase MutM</shortName>
        <ecNumber evidence="2">4.2.99.18</ecNumber>
    </alternativeName>
</protein>
<comment type="function">
    <text evidence="2">Involved in base excision repair of DNA damaged by oxidation or by mutagenic agents. Acts as a DNA glycosylase that recognizes and removes damaged bases. Has a preference for oxidized purines, such as 7,8-dihydro-8-oxoguanine (8-oxoG). Has AP (apurinic/apyrimidinic) lyase activity and introduces nicks in the DNA strand. Cleaves the DNA backbone by beta-delta elimination to generate a single-strand break at the site of the removed base with both 3'- and 5'-phosphates.</text>
</comment>
<comment type="catalytic activity">
    <reaction evidence="2">
        <text>Hydrolysis of DNA containing ring-opened 7-methylguanine residues, releasing 2,6-diamino-4-hydroxy-5-(N-methyl)formamidopyrimidine.</text>
        <dbReference type="EC" id="3.2.2.23"/>
    </reaction>
</comment>
<comment type="catalytic activity">
    <reaction evidence="2">
        <text>2'-deoxyribonucleotide-(2'-deoxyribose 5'-phosphate)-2'-deoxyribonucleotide-DNA = a 3'-end 2'-deoxyribonucleotide-(2,3-dehydro-2,3-deoxyribose 5'-phosphate)-DNA + a 5'-end 5'-phospho-2'-deoxyribonucleoside-DNA + H(+)</text>
        <dbReference type="Rhea" id="RHEA:66592"/>
        <dbReference type="Rhea" id="RHEA-COMP:13180"/>
        <dbReference type="Rhea" id="RHEA-COMP:16897"/>
        <dbReference type="Rhea" id="RHEA-COMP:17067"/>
        <dbReference type="ChEBI" id="CHEBI:15378"/>
        <dbReference type="ChEBI" id="CHEBI:136412"/>
        <dbReference type="ChEBI" id="CHEBI:157695"/>
        <dbReference type="ChEBI" id="CHEBI:167181"/>
        <dbReference type="EC" id="4.2.99.18"/>
    </reaction>
</comment>
<comment type="cofactor">
    <cofactor evidence="2">
        <name>Zn(2+)</name>
        <dbReference type="ChEBI" id="CHEBI:29105"/>
    </cofactor>
    <text evidence="2">Binds 1 zinc ion per subunit.</text>
</comment>
<comment type="subunit">
    <text evidence="2">Monomer.</text>
</comment>
<comment type="similarity">
    <text evidence="2">Belongs to the FPG family.</text>
</comment>
<name>FPG_VESOH</name>
<keyword id="KW-0227">DNA damage</keyword>
<keyword id="KW-0234">DNA repair</keyword>
<keyword id="KW-0238">DNA-binding</keyword>
<keyword id="KW-0326">Glycosidase</keyword>
<keyword id="KW-0378">Hydrolase</keyword>
<keyword id="KW-0456">Lyase</keyword>
<keyword id="KW-0479">Metal-binding</keyword>
<keyword id="KW-0511">Multifunctional enzyme</keyword>
<keyword id="KW-1185">Reference proteome</keyword>
<keyword id="KW-0862">Zinc</keyword>
<keyword id="KW-0863">Zinc-finger</keyword>
<reference key="1">
    <citation type="journal article" date="2007" name="Curr. Biol.">
        <title>Reduced genome of the thioautotrophic intracellular symbiont in a deep-sea clam, Calyptogena okutanii.</title>
        <authorList>
            <person name="Kuwahara H."/>
            <person name="Yoshida T."/>
            <person name="Takaki Y."/>
            <person name="Shimamura S."/>
            <person name="Nishi S."/>
            <person name="Harada M."/>
            <person name="Matsuyama K."/>
            <person name="Takishita K."/>
            <person name="Kawato M."/>
            <person name="Uematsu K."/>
            <person name="Fujiwara Y."/>
            <person name="Sato T."/>
            <person name="Kato C."/>
            <person name="Kitagawa M."/>
            <person name="Kato I."/>
            <person name="Maruyama T."/>
        </authorList>
    </citation>
    <scope>NUCLEOTIDE SEQUENCE [LARGE SCALE GENOMIC DNA]</scope>
    <source>
        <strain>HA</strain>
    </source>
</reference>
<gene>
    <name evidence="2" type="primary">mutM</name>
    <name evidence="2" type="synonym">fpg</name>
    <name type="ordered locus">COSY_0314</name>
</gene>
<sequence>MPELPEIETIKRGLTSLIINQKVNKAILHRENLRWVIPKHLSTTLTNQLISTIDRRGKYLLIKFKVGTLIIHLGMSGSIKVVNTNTPLLKHEHFELQLKNGTSMRLKDPRRFGAVLFSKDGSHKLLDSLGVEPLKTSFYDGYLYQKSRNKQQNIKAFIMDNKIVVGVGNIYACESLFMAGINPKLKAGSISKTRYNVLTQCIKNILTQAIEAGGTTLQDFVQVNGNPGYFTQNLSVYGCKNKKCYRCKGIIIKFVQNQRSTFYCKKCQT</sequence>